<feature type="chain" id="PRO_0000100874" description="Phosphoribosylaminoimidazole-succinocarboxamide synthase">
    <location>
        <begin position="1"/>
        <end position="234"/>
    </location>
</feature>
<sequence length="234" mass="26693">MTLLYEGKAKRIFSTNQENELRVEYKDEVTAGNGAKKDTMAGKGRLNNQITSIIFKYLQENGIESHFIKQLSETEQLVKPVKIIPLEVVVRNIASGSITKRLGFENGEVFREPLVEFFYKNDALNDPLITDDHVKLLNIASDEDIEILKSKALKINNVLKQLMDAMNLKLVDFKIEFGKTETGQILLADEISPDTCRIWDKATNANFDKDVYRNNTGSLIETYQIFLNKLEDLK</sequence>
<keyword id="KW-0067">ATP-binding</keyword>
<keyword id="KW-0436">Ligase</keyword>
<keyword id="KW-0547">Nucleotide-binding</keyword>
<keyword id="KW-0658">Purine biosynthesis</keyword>
<accession>P65892</accession>
<accession>Q99V31</accession>
<protein>
    <recommendedName>
        <fullName evidence="1">Phosphoribosylaminoimidazole-succinocarboxamide synthase</fullName>
        <ecNumber evidence="1">6.3.2.6</ecNumber>
    </recommendedName>
    <alternativeName>
        <fullName evidence="1">SAICAR synthetase</fullName>
    </alternativeName>
</protein>
<organism>
    <name type="scientific">Staphylococcus aureus (strain MW2)</name>
    <dbReference type="NCBI Taxonomy" id="196620"/>
    <lineage>
        <taxon>Bacteria</taxon>
        <taxon>Bacillati</taxon>
        <taxon>Bacillota</taxon>
        <taxon>Bacilli</taxon>
        <taxon>Bacillales</taxon>
        <taxon>Staphylococcaceae</taxon>
        <taxon>Staphylococcus</taxon>
    </lineage>
</organism>
<gene>
    <name evidence="1" type="primary">purC</name>
    <name type="ordered locus">MW0949</name>
</gene>
<comment type="catalytic activity">
    <reaction evidence="1">
        <text>5-amino-1-(5-phospho-D-ribosyl)imidazole-4-carboxylate + L-aspartate + ATP = (2S)-2-[5-amino-1-(5-phospho-beta-D-ribosyl)imidazole-4-carboxamido]succinate + ADP + phosphate + 2 H(+)</text>
        <dbReference type="Rhea" id="RHEA:22628"/>
        <dbReference type="ChEBI" id="CHEBI:15378"/>
        <dbReference type="ChEBI" id="CHEBI:29991"/>
        <dbReference type="ChEBI" id="CHEBI:30616"/>
        <dbReference type="ChEBI" id="CHEBI:43474"/>
        <dbReference type="ChEBI" id="CHEBI:58443"/>
        <dbReference type="ChEBI" id="CHEBI:77657"/>
        <dbReference type="ChEBI" id="CHEBI:456216"/>
        <dbReference type="EC" id="6.3.2.6"/>
    </reaction>
</comment>
<comment type="pathway">
    <text evidence="1">Purine metabolism; IMP biosynthesis via de novo pathway; 5-amino-1-(5-phospho-D-ribosyl)imidazole-4-carboxamide from 5-amino-1-(5-phospho-D-ribosyl)imidazole-4-carboxylate: step 1/2.</text>
</comment>
<comment type="similarity">
    <text evidence="1">Belongs to the SAICAR synthetase family.</text>
</comment>
<name>PUR7_STAAW</name>
<evidence type="ECO:0000255" key="1">
    <source>
        <dbReference type="HAMAP-Rule" id="MF_00137"/>
    </source>
</evidence>
<reference key="1">
    <citation type="journal article" date="2002" name="Lancet">
        <title>Genome and virulence determinants of high virulence community-acquired MRSA.</title>
        <authorList>
            <person name="Baba T."/>
            <person name="Takeuchi F."/>
            <person name="Kuroda M."/>
            <person name="Yuzawa H."/>
            <person name="Aoki K."/>
            <person name="Oguchi A."/>
            <person name="Nagai Y."/>
            <person name="Iwama N."/>
            <person name="Asano K."/>
            <person name="Naimi T."/>
            <person name="Kuroda H."/>
            <person name="Cui L."/>
            <person name="Yamamoto K."/>
            <person name="Hiramatsu K."/>
        </authorList>
    </citation>
    <scope>NUCLEOTIDE SEQUENCE [LARGE SCALE GENOMIC DNA]</scope>
    <source>
        <strain>MW2</strain>
    </source>
</reference>
<proteinExistence type="inferred from homology"/>
<dbReference type="EC" id="6.3.2.6" evidence="1"/>
<dbReference type="EMBL" id="BA000033">
    <property type="protein sequence ID" value="BAB94814.1"/>
    <property type="molecule type" value="Genomic_DNA"/>
</dbReference>
<dbReference type="RefSeq" id="WP_000174053.1">
    <property type="nucleotide sequence ID" value="NC_003923.1"/>
</dbReference>
<dbReference type="SMR" id="P65892"/>
<dbReference type="KEGG" id="sam:MW0949"/>
<dbReference type="HOGENOM" id="CLU_061495_2_0_9"/>
<dbReference type="UniPathway" id="UPA00074">
    <property type="reaction ID" value="UER00131"/>
</dbReference>
<dbReference type="GO" id="GO:0005524">
    <property type="term" value="F:ATP binding"/>
    <property type="evidence" value="ECO:0007669"/>
    <property type="project" value="UniProtKB-KW"/>
</dbReference>
<dbReference type="GO" id="GO:0004639">
    <property type="term" value="F:phosphoribosylaminoimidazolesuccinocarboxamide synthase activity"/>
    <property type="evidence" value="ECO:0007669"/>
    <property type="project" value="UniProtKB-UniRule"/>
</dbReference>
<dbReference type="GO" id="GO:0006189">
    <property type="term" value="P:'de novo' IMP biosynthetic process"/>
    <property type="evidence" value="ECO:0007669"/>
    <property type="project" value="UniProtKB-UniRule"/>
</dbReference>
<dbReference type="GO" id="GO:0009236">
    <property type="term" value="P:cobalamin biosynthetic process"/>
    <property type="evidence" value="ECO:0007669"/>
    <property type="project" value="InterPro"/>
</dbReference>
<dbReference type="CDD" id="cd01415">
    <property type="entry name" value="SAICAR_synt_PurC"/>
    <property type="match status" value="1"/>
</dbReference>
<dbReference type="FunFam" id="3.30.200.20:FF:000189">
    <property type="entry name" value="Phosphoribosylaminoimidazole-succinocarboxamide synthase"/>
    <property type="match status" value="1"/>
</dbReference>
<dbReference type="FunFam" id="3.30.470.20:FF:000006">
    <property type="entry name" value="Phosphoribosylaminoimidazole-succinocarboxamide synthase"/>
    <property type="match status" value="1"/>
</dbReference>
<dbReference type="Gene3D" id="3.30.470.20">
    <property type="entry name" value="ATP-grasp fold, B domain"/>
    <property type="match status" value="1"/>
</dbReference>
<dbReference type="Gene3D" id="3.30.200.20">
    <property type="entry name" value="Phosphorylase Kinase, domain 1"/>
    <property type="match status" value="1"/>
</dbReference>
<dbReference type="HAMAP" id="MF_00137">
    <property type="entry name" value="SAICAR_synth"/>
    <property type="match status" value="1"/>
</dbReference>
<dbReference type="InterPro" id="IPR028923">
    <property type="entry name" value="SAICAR_synt/ADE2_N"/>
</dbReference>
<dbReference type="InterPro" id="IPR033934">
    <property type="entry name" value="SAICAR_synt_PurC"/>
</dbReference>
<dbReference type="InterPro" id="IPR001636">
    <property type="entry name" value="SAICAR_synth"/>
</dbReference>
<dbReference type="InterPro" id="IPR050089">
    <property type="entry name" value="SAICAR_synthetase"/>
</dbReference>
<dbReference type="InterPro" id="IPR018236">
    <property type="entry name" value="SAICAR_synthetase_CS"/>
</dbReference>
<dbReference type="NCBIfam" id="TIGR00081">
    <property type="entry name" value="purC"/>
    <property type="match status" value="1"/>
</dbReference>
<dbReference type="PANTHER" id="PTHR43599">
    <property type="entry name" value="MULTIFUNCTIONAL PROTEIN ADE2"/>
    <property type="match status" value="1"/>
</dbReference>
<dbReference type="PANTHER" id="PTHR43599:SF3">
    <property type="entry name" value="SI:DKEY-6E2.2"/>
    <property type="match status" value="1"/>
</dbReference>
<dbReference type="Pfam" id="PF01259">
    <property type="entry name" value="SAICAR_synt"/>
    <property type="match status" value="1"/>
</dbReference>
<dbReference type="SUPFAM" id="SSF56104">
    <property type="entry name" value="SAICAR synthase-like"/>
    <property type="match status" value="1"/>
</dbReference>
<dbReference type="PROSITE" id="PS01057">
    <property type="entry name" value="SAICAR_SYNTHETASE_1"/>
    <property type="match status" value="1"/>
</dbReference>
<dbReference type="PROSITE" id="PS01058">
    <property type="entry name" value="SAICAR_SYNTHETASE_2"/>
    <property type="match status" value="1"/>
</dbReference>